<accession>Q9ENL0</accession>
<reference key="1">
    <citation type="journal article" date="2000" name="Biochem. Biophys. Res. Commun.">
        <title>Sequence determination and analysis of the full-length genome of colorado tick fever virus, the type species of genus Coltivirus (Family Reoviridae).</title>
        <authorList>
            <person name="Attoui H."/>
            <person name="Billoir F."/>
            <person name="Biagini P."/>
            <person name="Cantaloube J.F."/>
            <person name="de Chesse R."/>
            <person name="de Micco P."/>
            <person name="de Lamballerie X."/>
        </authorList>
    </citation>
    <scope>NUCLEOTIDE SEQUENCE [GENOMIC RNA]</scope>
</reference>
<protein>
    <recommendedName>
        <fullName>Uncharacterized protein VP6</fullName>
    </recommendedName>
</protein>
<proteinExistence type="predicted"/>
<feature type="chain" id="PRO_0000403194" description="Uncharacterized protein VP6">
    <location>
        <begin position="1"/>
        <end position="697"/>
    </location>
</feature>
<feature type="coiled-coil region" evidence="1">
    <location>
        <begin position="516"/>
        <end position="545"/>
    </location>
</feature>
<organismHost>
    <name type="scientific">Callospermophilus lateralis</name>
    <name type="common">Golden-mantled ground squirrel</name>
    <name type="synonym">Spermophilus lateralis</name>
    <dbReference type="NCBI Taxonomy" id="76772"/>
</organismHost>
<organismHost>
    <name type="scientific">Dermacentor andersoni</name>
    <name type="common">Rocky mountain wood tick</name>
    <dbReference type="NCBI Taxonomy" id="34620"/>
</organismHost>
<organismHost>
    <name type="scientific">Erethizon dorsatum</name>
    <name type="common">North American porcupine</name>
    <name type="synonym">Hystrix dorsata</name>
    <dbReference type="NCBI Taxonomy" id="34844"/>
</organismHost>
<organismHost>
    <name type="scientific">Homo sapiens</name>
    <name type="common">Human</name>
    <dbReference type="NCBI Taxonomy" id="9606"/>
</organismHost>
<organismHost>
    <name type="scientific">Neotoma cinerea</name>
    <name type="common">Bushy-tailed woodrat</name>
    <name type="synonym">Mus cinereus</name>
    <dbReference type="NCBI Taxonomy" id="105147"/>
</organismHost>
<organismHost>
    <name type="scientific">Peromyscus maniculatus</name>
    <name type="common">North American deer mouse</name>
    <dbReference type="NCBI Taxonomy" id="10042"/>
</organismHost>
<organism>
    <name type="scientific">Colorado tick fever virus (strain USA/Florio N-7180)</name>
    <name type="common">CTFV</name>
    <dbReference type="NCBI Taxonomy" id="648168"/>
    <lineage>
        <taxon>Viruses</taxon>
        <taxon>Riboviria</taxon>
        <taxon>Orthornavirae</taxon>
        <taxon>Duplornaviricota</taxon>
        <taxon>Resentoviricetes</taxon>
        <taxon>Reovirales</taxon>
        <taxon>Spinareoviridae</taxon>
        <taxon>Coltivirus</taxon>
        <taxon>Colorado tick fever coltivirus</taxon>
    </lineage>
</organism>
<keyword id="KW-0175">Coiled coil</keyword>
<keyword id="KW-1185">Reference proteome</keyword>
<evidence type="ECO:0000255" key="1"/>
<dbReference type="EMBL" id="AF139762">
    <property type="protein sequence ID" value="AAG00071.1"/>
    <property type="molecule type" value="Genomic_RNA"/>
</dbReference>
<dbReference type="RefSeq" id="NP_690896.1">
    <property type="nucleotide sequence ID" value="NC_004186.1"/>
</dbReference>
<dbReference type="GeneID" id="993314"/>
<dbReference type="KEGG" id="vg:993314"/>
<dbReference type="Proteomes" id="UP000001675">
    <property type="component" value="Genome"/>
</dbReference>
<name>VP6_CTFVL</name>
<sequence length="697" mass="77614">MAASGWNAVIPKTSSYDYITVSIQPAQQDNKKNLVIEFPPVSYFYGVYWTTDDMIIVRLPASTTSSQDLSKMVTITKLRWTFQNQKFTCSVGSDLAFRIIMTCNVGTMYFTATFLLNTLTSTGTKVYGMFNYVSLSSLVVVVTGNDAAHVEALIAVEGAAVRNQVAKLILWSVTETTNYLSFEKLISKAGKDVESGYYKGDTKTKRAIQALSISQGESWYYTELCTSSPLDVGGSGLAFFMRIRGVGLRSEAGVTPWKVSEIFKPLTSRLESDFSYSIHPEAQEDDSVVVHKAHLLAQNIIRDLGYKTVAELDTAEDSHLPVGSADCLAALLDLLYRRSEEMTLALNREYKPRRRRAAIAPQIQDPAVPAIQTYQNLVAGMLGELNKSQQEVLAFKGKFEQLERKVNNHLAVNPLTKLSRIKQRMDQFETSLAGVSSVVNEVQGLRNSHGQLSTEINRIKEAEGHFLNDLESVRRHLQGETGHLRSQLGNSLVTIFKPIIKMISRDIGMCLKVGSADQSQNDVVALSSRIDRLTQEVVALQNSEKPRLFYLHDKSEIKAAAGALEAVAAHVYLGWMSQRFICPPVLGTVYHHDRYIQGVYYKLVACTIEMVHLDKGTMILLIRDEILPVGVLHEVESNIVLDQCDHVPGIVRLSRDRVSPVDYIEVYEVVDPGVFTLSFSHVIAIYIPRCSGLRLLP</sequence>